<accession>Q7V9C6</accession>
<comment type="function">
    <text evidence="1">One of several proteins that assist in the late maturation steps of the functional core of the 30S ribosomal subunit. Helps release RbfA from mature subunits. May play a role in the assembly of ribosomal proteins into the subunit. Circularly permuted GTPase that catalyzes slow GTP hydrolysis, GTPase activity is stimulated by the 30S ribosomal subunit.</text>
</comment>
<comment type="cofactor">
    <cofactor evidence="1">
        <name>Zn(2+)</name>
        <dbReference type="ChEBI" id="CHEBI:29105"/>
    </cofactor>
    <text evidence="1">Binds 1 zinc ion per subunit.</text>
</comment>
<comment type="subunit">
    <text evidence="1">Monomer. Associates with 30S ribosomal subunit, binds 16S rRNA.</text>
</comment>
<comment type="subcellular location">
    <subcellularLocation>
        <location evidence="1">Cytoplasm</location>
    </subcellularLocation>
</comment>
<comment type="similarity">
    <text evidence="1">Belongs to the TRAFAC class YlqF/YawG GTPase family. RsgA subfamily.</text>
</comment>
<organism>
    <name type="scientific">Prochlorococcus marinus (strain MIT 9313)</name>
    <dbReference type="NCBI Taxonomy" id="74547"/>
    <lineage>
        <taxon>Bacteria</taxon>
        <taxon>Bacillati</taxon>
        <taxon>Cyanobacteriota</taxon>
        <taxon>Cyanophyceae</taxon>
        <taxon>Synechococcales</taxon>
        <taxon>Prochlorococcaceae</taxon>
        <taxon>Prochlorococcus</taxon>
    </lineage>
</organism>
<sequence>MAAAEAPRLAGMVVALQANFLEVELETFNPSSLVSWTGSTDDEPLRLLCTRRTRLDHRGAAVHVGDRVWVEAIDWQERRAVVGDVEPRQSWINRPPVANVTAVVVALAVKQPCFDADQASRFLLSAEQTGVDVHLILTKRDLITSDQLEQQLVRLRGWGYRPMAVSVQTGEGLGALKNKLSSTRLAVFCGPSGVGKTSLLNQLLPQLSLRVGAVSGRLKRGRHTTRHVELFRLCEGSLVADTPGFNRPELPADLRKLAVLFPELDGQLEDYPCRFRDCFHRDEPGCGVDKSWERYPIYKRFLEEMECLTRSSRGGSGSGLL</sequence>
<keyword id="KW-0963">Cytoplasm</keyword>
<keyword id="KW-0342">GTP-binding</keyword>
<keyword id="KW-0378">Hydrolase</keyword>
<keyword id="KW-0479">Metal-binding</keyword>
<keyword id="KW-0547">Nucleotide-binding</keyword>
<keyword id="KW-1185">Reference proteome</keyword>
<keyword id="KW-0690">Ribosome biogenesis</keyword>
<keyword id="KW-0694">RNA-binding</keyword>
<keyword id="KW-0699">rRNA-binding</keyword>
<keyword id="KW-0862">Zinc</keyword>
<dbReference type="EC" id="3.6.1.-" evidence="1"/>
<dbReference type="EMBL" id="BX548175">
    <property type="protein sequence ID" value="CAE20199.1"/>
    <property type="molecule type" value="Genomic_DNA"/>
</dbReference>
<dbReference type="RefSeq" id="WP_011129403.1">
    <property type="nucleotide sequence ID" value="NC_005071.1"/>
</dbReference>
<dbReference type="SMR" id="Q7V9C6"/>
<dbReference type="KEGG" id="pmt:PMT_0024"/>
<dbReference type="eggNOG" id="COG1162">
    <property type="taxonomic scope" value="Bacteria"/>
</dbReference>
<dbReference type="HOGENOM" id="CLU_033617_2_1_3"/>
<dbReference type="OrthoDB" id="9809485at2"/>
<dbReference type="Proteomes" id="UP000001423">
    <property type="component" value="Chromosome"/>
</dbReference>
<dbReference type="GO" id="GO:0005737">
    <property type="term" value="C:cytoplasm"/>
    <property type="evidence" value="ECO:0007669"/>
    <property type="project" value="UniProtKB-SubCell"/>
</dbReference>
<dbReference type="GO" id="GO:0005525">
    <property type="term" value="F:GTP binding"/>
    <property type="evidence" value="ECO:0007669"/>
    <property type="project" value="UniProtKB-UniRule"/>
</dbReference>
<dbReference type="GO" id="GO:0003924">
    <property type="term" value="F:GTPase activity"/>
    <property type="evidence" value="ECO:0007669"/>
    <property type="project" value="UniProtKB-UniRule"/>
</dbReference>
<dbReference type="GO" id="GO:0046872">
    <property type="term" value="F:metal ion binding"/>
    <property type="evidence" value="ECO:0007669"/>
    <property type="project" value="UniProtKB-KW"/>
</dbReference>
<dbReference type="GO" id="GO:0019843">
    <property type="term" value="F:rRNA binding"/>
    <property type="evidence" value="ECO:0007669"/>
    <property type="project" value="UniProtKB-KW"/>
</dbReference>
<dbReference type="GO" id="GO:0042274">
    <property type="term" value="P:ribosomal small subunit biogenesis"/>
    <property type="evidence" value="ECO:0007669"/>
    <property type="project" value="UniProtKB-UniRule"/>
</dbReference>
<dbReference type="CDD" id="cd01854">
    <property type="entry name" value="YjeQ_EngC"/>
    <property type="match status" value="1"/>
</dbReference>
<dbReference type="Gene3D" id="3.40.50.300">
    <property type="entry name" value="P-loop containing nucleotide triphosphate hydrolases"/>
    <property type="match status" value="1"/>
</dbReference>
<dbReference type="Gene3D" id="1.10.40.50">
    <property type="entry name" value="Probable gtpase engc, domain 3"/>
    <property type="match status" value="1"/>
</dbReference>
<dbReference type="HAMAP" id="MF_01820">
    <property type="entry name" value="GTPase_RsgA"/>
    <property type="match status" value="1"/>
</dbReference>
<dbReference type="InterPro" id="IPR030378">
    <property type="entry name" value="G_CP_dom"/>
</dbReference>
<dbReference type="InterPro" id="IPR012340">
    <property type="entry name" value="NA-bd_OB-fold"/>
</dbReference>
<dbReference type="InterPro" id="IPR027417">
    <property type="entry name" value="P-loop_NTPase"/>
</dbReference>
<dbReference type="InterPro" id="IPR004881">
    <property type="entry name" value="Ribosome_biogen_GTPase_RsgA"/>
</dbReference>
<dbReference type="InterPro" id="IPR010914">
    <property type="entry name" value="RsgA_GTPase_dom"/>
</dbReference>
<dbReference type="NCBIfam" id="TIGR00157">
    <property type="entry name" value="ribosome small subunit-dependent GTPase A"/>
    <property type="match status" value="1"/>
</dbReference>
<dbReference type="PANTHER" id="PTHR32120">
    <property type="entry name" value="SMALL RIBOSOMAL SUBUNIT BIOGENESIS GTPASE RSGA"/>
    <property type="match status" value="1"/>
</dbReference>
<dbReference type="PANTHER" id="PTHR32120:SF11">
    <property type="entry name" value="SMALL RIBOSOMAL SUBUNIT BIOGENESIS GTPASE RSGA 1, MITOCHONDRIAL-RELATED"/>
    <property type="match status" value="1"/>
</dbReference>
<dbReference type="Pfam" id="PF03193">
    <property type="entry name" value="RsgA_GTPase"/>
    <property type="match status" value="1"/>
</dbReference>
<dbReference type="SUPFAM" id="SSF50249">
    <property type="entry name" value="Nucleic acid-binding proteins"/>
    <property type="match status" value="1"/>
</dbReference>
<dbReference type="SUPFAM" id="SSF52540">
    <property type="entry name" value="P-loop containing nucleoside triphosphate hydrolases"/>
    <property type="match status" value="1"/>
</dbReference>
<dbReference type="PROSITE" id="PS50936">
    <property type="entry name" value="ENGC_GTPASE"/>
    <property type="match status" value="1"/>
</dbReference>
<dbReference type="PROSITE" id="PS51721">
    <property type="entry name" value="G_CP"/>
    <property type="match status" value="1"/>
</dbReference>
<proteinExistence type="inferred from homology"/>
<evidence type="ECO:0000255" key="1">
    <source>
        <dbReference type="HAMAP-Rule" id="MF_01820"/>
    </source>
</evidence>
<evidence type="ECO:0000255" key="2">
    <source>
        <dbReference type="PROSITE-ProRule" id="PRU01058"/>
    </source>
</evidence>
<name>RSGA_PROMM</name>
<gene>
    <name evidence="1" type="primary">rsgA</name>
    <name type="ordered locus">PMT_0024</name>
</gene>
<protein>
    <recommendedName>
        <fullName evidence="1">Small ribosomal subunit biogenesis GTPase RsgA</fullName>
        <ecNumber evidence="1">3.6.1.-</ecNumber>
    </recommendedName>
</protein>
<feature type="chain" id="PRO_1000188118" description="Small ribosomal subunit biogenesis GTPase RsgA">
    <location>
        <begin position="1"/>
        <end position="321"/>
    </location>
</feature>
<feature type="domain" description="CP-type G" evidence="2">
    <location>
        <begin position="89"/>
        <end position="248"/>
    </location>
</feature>
<feature type="binding site" evidence="1">
    <location>
        <begin position="138"/>
        <end position="141"/>
    </location>
    <ligand>
        <name>GTP</name>
        <dbReference type="ChEBI" id="CHEBI:37565"/>
    </ligand>
</feature>
<feature type="binding site" evidence="1">
    <location>
        <begin position="190"/>
        <end position="198"/>
    </location>
    <ligand>
        <name>GTP</name>
        <dbReference type="ChEBI" id="CHEBI:37565"/>
    </ligand>
</feature>
<feature type="binding site" evidence="1">
    <location>
        <position position="273"/>
    </location>
    <ligand>
        <name>Zn(2+)</name>
        <dbReference type="ChEBI" id="CHEBI:29105"/>
    </ligand>
</feature>
<feature type="binding site" evidence="1">
    <location>
        <position position="278"/>
    </location>
    <ligand>
        <name>Zn(2+)</name>
        <dbReference type="ChEBI" id="CHEBI:29105"/>
    </ligand>
</feature>
<feature type="binding site" evidence="1">
    <location>
        <position position="280"/>
    </location>
    <ligand>
        <name>Zn(2+)</name>
        <dbReference type="ChEBI" id="CHEBI:29105"/>
    </ligand>
</feature>
<feature type="binding site" evidence="1">
    <location>
        <position position="286"/>
    </location>
    <ligand>
        <name>Zn(2+)</name>
        <dbReference type="ChEBI" id="CHEBI:29105"/>
    </ligand>
</feature>
<reference key="1">
    <citation type="journal article" date="2003" name="Nature">
        <title>Genome divergence in two Prochlorococcus ecotypes reflects oceanic niche differentiation.</title>
        <authorList>
            <person name="Rocap G."/>
            <person name="Larimer F.W."/>
            <person name="Lamerdin J.E."/>
            <person name="Malfatti S."/>
            <person name="Chain P."/>
            <person name="Ahlgren N.A."/>
            <person name="Arellano A."/>
            <person name="Coleman M."/>
            <person name="Hauser L."/>
            <person name="Hess W.R."/>
            <person name="Johnson Z.I."/>
            <person name="Land M.L."/>
            <person name="Lindell D."/>
            <person name="Post A.F."/>
            <person name="Regala W."/>
            <person name="Shah M."/>
            <person name="Shaw S.L."/>
            <person name="Steglich C."/>
            <person name="Sullivan M.B."/>
            <person name="Ting C.S."/>
            <person name="Tolonen A."/>
            <person name="Webb E.A."/>
            <person name="Zinser E.R."/>
            <person name="Chisholm S.W."/>
        </authorList>
    </citation>
    <scope>NUCLEOTIDE SEQUENCE [LARGE SCALE GENOMIC DNA]</scope>
    <source>
        <strain>MIT 9313</strain>
    </source>
</reference>